<name>PBN1_NEUCR</name>
<sequence>MRERITFIQKQGDSIEPTTLKIKGGVLNGPEIQAAREDRLTIAIDELPKDLQALLGTAHELHIRYVSSQPYEAITPLLARLPPGFHLFYTPAGQADATSPALCLALNQIFGNVQCENPEKSFTTLPRDRFSHSAAYQFYQPSVDLSPFIALVKEKLCSSSKDQSCAARADRLANASSLDISYDAISHAVKLTATWPYQKQEVHATSRPQTRTEVGVLNSDRPGHLEPHELGISGLLTVLGQDKKPSATMFAFASRHRDAESSFSAEFLEPTGLHPTLKLRLESSKPPIEDAYCSPHAYFTLPKTIFADRHQLSDDLFLASKNLTGLRYISQPVDLEAPEYVEKRWGSSLLLELSPPEHEESKSWTVQVPLHLRYLSPAEGGYTDIQVPYPAVFWACAAEEGTKFPNNPFEKANLGYDGLFGPRTVFWHVEPRPTIGSRLSNMIKVPVLDTNKAEWVSGGTGLAVLLGFAWIMWKLFGVLSKSGYQNQPSQAAEVVKAKKNQ</sequence>
<dbReference type="EMBL" id="CM002238">
    <property type="protein sequence ID" value="EAA27989.1"/>
    <property type="molecule type" value="Genomic_DNA"/>
</dbReference>
<dbReference type="RefSeq" id="XP_957225.1">
    <property type="nucleotide sequence ID" value="XM_952132.3"/>
</dbReference>
<dbReference type="STRING" id="367110.Q7RYM7"/>
<dbReference type="GlyCosmos" id="Q7RYM7">
    <property type="glycosylation" value="2 sites, No reported glycans"/>
</dbReference>
<dbReference type="PaxDb" id="5141-EFNCRP00000000076"/>
<dbReference type="EnsemblFungi" id="EAA27989">
    <property type="protein sequence ID" value="EAA27989"/>
    <property type="gene ID" value="NCU00101"/>
</dbReference>
<dbReference type="GeneID" id="3873388"/>
<dbReference type="KEGG" id="ncr:NCU00101"/>
<dbReference type="VEuPathDB" id="FungiDB:NCU00101"/>
<dbReference type="HOGENOM" id="CLU_030047_0_0_1"/>
<dbReference type="InParanoid" id="Q7RYM7"/>
<dbReference type="OrthoDB" id="5546453at2759"/>
<dbReference type="UniPathway" id="UPA00196"/>
<dbReference type="Proteomes" id="UP000001805">
    <property type="component" value="Chromosome 3, Linkage Group III"/>
</dbReference>
<dbReference type="GO" id="GO:0005789">
    <property type="term" value="C:endoplasmic reticulum membrane"/>
    <property type="evidence" value="ECO:0007669"/>
    <property type="project" value="UniProtKB-SubCell"/>
</dbReference>
<dbReference type="GO" id="GO:1990529">
    <property type="term" value="C:glycosylphosphatidylinositol-mannosyltransferase I complex"/>
    <property type="evidence" value="ECO:0000318"/>
    <property type="project" value="GO_Central"/>
</dbReference>
<dbReference type="GO" id="GO:0006506">
    <property type="term" value="P:GPI anchor biosynthetic process"/>
    <property type="evidence" value="ECO:0000318"/>
    <property type="project" value="GO_Central"/>
</dbReference>
<dbReference type="InterPro" id="IPR042322">
    <property type="entry name" value="Pbn1"/>
</dbReference>
<dbReference type="InterPro" id="IPR013233">
    <property type="entry name" value="PIG-X/PBN1"/>
</dbReference>
<dbReference type="PANTHER" id="PTHR28533">
    <property type="entry name" value="PROTEIN PBN1"/>
    <property type="match status" value="1"/>
</dbReference>
<dbReference type="PANTHER" id="PTHR28533:SF1">
    <property type="entry name" value="PROTEIN PBN1"/>
    <property type="match status" value="1"/>
</dbReference>
<dbReference type="Pfam" id="PF08320">
    <property type="entry name" value="PIG-X"/>
    <property type="match status" value="1"/>
</dbReference>
<dbReference type="SMART" id="SM00780">
    <property type="entry name" value="PIG-X"/>
    <property type="match status" value="1"/>
</dbReference>
<keyword id="KW-0256">Endoplasmic reticulum</keyword>
<keyword id="KW-0325">Glycoprotein</keyword>
<keyword id="KW-0337">GPI-anchor biosynthesis</keyword>
<keyword id="KW-0472">Membrane</keyword>
<keyword id="KW-1185">Reference proteome</keyword>
<keyword id="KW-0812">Transmembrane</keyword>
<keyword id="KW-1133">Transmembrane helix</keyword>
<gene>
    <name type="primary">pbn1</name>
    <name type="ORF">NCU00101</name>
</gene>
<reference key="1">
    <citation type="journal article" date="2003" name="Nature">
        <title>The genome sequence of the filamentous fungus Neurospora crassa.</title>
        <authorList>
            <person name="Galagan J.E."/>
            <person name="Calvo S.E."/>
            <person name="Borkovich K.A."/>
            <person name="Selker E.U."/>
            <person name="Read N.D."/>
            <person name="Jaffe D.B."/>
            <person name="FitzHugh W."/>
            <person name="Ma L.-J."/>
            <person name="Smirnov S."/>
            <person name="Purcell S."/>
            <person name="Rehman B."/>
            <person name="Elkins T."/>
            <person name="Engels R."/>
            <person name="Wang S."/>
            <person name="Nielsen C.B."/>
            <person name="Butler J."/>
            <person name="Endrizzi M."/>
            <person name="Qui D."/>
            <person name="Ianakiev P."/>
            <person name="Bell-Pedersen D."/>
            <person name="Nelson M.A."/>
            <person name="Werner-Washburne M."/>
            <person name="Selitrennikoff C.P."/>
            <person name="Kinsey J.A."/>
            <person name="Braun E.L."/>
            <person name="Zelter A."/>
            <person name="Schulte U."/>
            <person name="Kothe G.O."/>
            <person name="Jedd G."/>
            <person name="Mewes H.-W."/>
            <person name="Staben C."/>
            <person name="Marcotte E."/>
            <person name="Greenberg D."/>
            <person name="Roy A."/>
            <person name="Foley K."/>
            <person name="Naylor J."/>
            <person name="Stange-Thomann N."/>
            <person name="Barrett R."/>
            <person name="Gnerre S."/>
            <person name="Kamal M."/>
            <person name="Kamvysselis M."/>
            <person name="Mauceli E.W."/>
            <person name="Bielke C."/>
            <person name="Rudd S."/>
            <person name="Frishman D."/>
            <person name="Krystofova S."/>
            <person name="Rasmussen C."/>
            <person name="Metzenberg R.L."/>
            <person name="Perkins D.D."/>
            <person name="Kroken S."/>
            <person name="Cogoni C."/>
            <person name="Macino G."/>
            <person name="Catcheside D.E.A."/>
            <person name="Li W."/>
            <person name="Pratt R.J."/>
            <person name="Osmani S.A."/>
            <person name="DeSouza C.P.C."/>
            <person name="Glass N.L."/>
            <person name="Orbach M.J."/>
            <person name="Berglund J.A."/>
            <person name="Voelker R."/>
            <person name="Yarden O."/>
            <person name="Plamann M."/>
            <person name="Seiler S."/>
            <person name="Dunlap J.C."/>
            <person name="Radford A."/>
            <person name="Aramayo R."/>
            <person name="Natvig D.O."/>
            <person name="Alex L.A."/>
            <person name="Mannhaupt G."/>
            <person name="Ebbole D.J."/>
            <person name="Freitag M."/>
            <person name="Paulsen I."/>
            <person name="Sachs M.S."/>
            <person name="Lander E.S."/>
            <person name="Nusbaum C."/>
            <person name="Birren B.W."/>
        </authorList>
    </citation>
    <scope>NUCLEOTIDE SEQUENCE [LARGE SCALE GENOMIC DNA]</scope>
    <source>
        <strain>ATCC 24698 / 74-OR23-1A / CBS 708.71 / DSM 1257 / FGSC 987</strain>
    </source>
</reference>
<organism>
    <name type="scientific">Neurospora crassa (strain ATCC 24698 / 74-OR23-1A / CBS 708.71 / DSM 1257 / FGSC 987)</name>
    <dbReference type="NCBI Taxonomy" id="367110"/>
    <lineage>
        <taxon>Eukaryota</taxon>
        <taxon>Fungi</taxon>
        <taxon>Dikarya</taxon>
        <taxon>Ascomycota</taxon>
        <taxon>Pezizomycotina</taxon>
        <taxon>Sordariomycetes</taxon>
        <taxon>Sordariomycetidae</taxon>
        <taxon>Sordariales</taxon>
        <taxon>Sordariaceae</taxon>
        <taxon>Neurospora</taxon>
    </lineage>
</organism>
<feature type="chain" id="PRO_0000246307" description="Protein pbn1">
    <location>
        <begin position="1"/>
        <end position="501"/>
    </location>
</feature>
<feature type="topological domain" description="Lumenal" evidence="2">
    <location>
        <begin position="1"/>
        <end position="458"/>
    </location>
</feature>
<feature type="transmembrane region" description="Helical" evidence="2">
    <location>
        <begin position="459"/>
        <end position="479"/>
    </location>
</feature>
<feature type="topological domain" description="Cytoplasmic" evidence="2">
    <location>
        <begin position="480"/>
        <end position="501"/>
    </location>
</feature>
<feature type="glycosylation site" description="N-linked (GlcNAc...) asparagine" evidence="2">
    <location>
        <position position="174"/>
    </location>
</feature>
<feature type="glycosylation site" description="N-linked (GlcNAc...) asparagine" evidence="2">
    <location>
        <position position="322"/>
    </location>
</feature>
<accession>Q7RYM7</accession>
<evidence type="ECO:0000250" key="1"/>
<evidence type="ECO:0000255" key="2"/>
<evidence type="ECO:0000305" key="3"/>
<proteinExistence type="inferred from homology"/>
<protein>
    <recommendedName>
        <fullName>Protein pbn1</fullName>
    </recommendedName>
</protein>
<comment type="function">
    <text evidence="1">Required for proper folding and/or the stability of a subset of proteins in the endoplasmic reticulum. Component of glycosylphosphatidylinositol-mannosyltransferase 1 which transfers the first of the 4 mannoses in the GPI-anchor precursors during GPI-anchor biosynthesis. Probably acts by stabilizing the mannosyltransferase gim-1/gpi14 (By similarity).</text>
</comment>
<comment type="pathway">
    <text>Glycolipid biosynthesis; glycosylphosphatidylinositol-anchor biosynthesis.</text>
</comment>
<comment type="subcellular location">
    <subcellularLocation>
        <location evidence="1">Endoplasmic reticulum membrane</location>
        <topology evidence="1">Single-pass type III membrane protein</topology>
    </subcellularLocation>
</comment>
<comment type="similarity">
    <text evidence="3">Belongs to the PIGX family.</text>
</comment>